<protein>
    <recommendedName>
        <fullName evidence="1">Dual-specificity RNA methyltransferase RlmN</fullName>
        <ecNumber evidence="1">2.1.1.192</ecNumber>
    </recommendedName>
    <alternativeName>
        <fullName evidence="1">23S rRNA (adenine(2503)-C(2))-methyltransferase</fullName>
    </alternativeName>
    <alternativeName>
        <fullName evidence="1">23S rRNA m2A2503 methyltransferase</fullName>
    </alternativeName>
    <alternativeName>
        <fullName evidence="1">Ribosomal RNA large subunit methyltransferase N</fullName>
    </alternativeName>
    <alternativeName>
        <fullName evidence="1">tRNA (adenine(37)-C(2))-methyltransferase</fullName>
    </alternativeName>
    <alternativeName>
        <fullName evidence="1">tRNA m2A37 methyltransferase</fullName>
    </alternativeName>
</protein>
<sequence>MIQRHLGQPRLIQNGGDAGGVKAVAQKQTQRRLDQIFPAGRGSHANLHSIPTGYACIIAALTENSQRRHCFAARPSLCVAVMDDSKTNLIGLSRDQLIAEMASIGEKPFRAKQLWHWMYNRGETDFAKMTSISKSMHGALAERYVVRRPGVTKELISADTTRKWLLKFDDGHEAETVYIPDADEERGAVCISTQVGCTLTCRFCHTGTQLLVRNLSAAEIVGQFMVARDSYGEWPTPDDGGRQLSNIVVMGMGEPLYNFENVATALEIAMDGEGIGISKRRITLSTSGVVPMMKECGERLGVNLAVSLHAVTDEIRDRIMPINKKYPLKELMQACREYPGASNARRITFEYIMLKGINDSAADARALLKLVKGLPAKFNLIPFNPWPGSEFDTPDIKTTKAFSDILQDAGYSAPIRMPRGRDILAACGQLRSESQRERASLAKARAAAGIADEHHG</sequence>
<proteinExistence type="inferred from homology"/>
<dbReference type="EC" id="2.1.1.192" evidence="1"/>
<dbReference type="EMBL" id="AP007255">
    <property type="protein sequence ID" value="BAE49928.1"/>
    <property type="status" value="ALT_INIT"/>
    <property type="molecule type" value="Genomic_DNA"/>
</dbReference>
<dbReference type="SMR" id="Q2W897"/>
<dbReference type="STRING" id="342108.amb1124"/>
<dbReference type="KEGG" id="mag:amb1124"/>
<dbReference type="HOGENOM" id="CLU_498564_0_0_5"/>
<dbReference type="Proteomes" id="UP000007058">
    <property type="component" value="Chromosome"/>
</dbReference>
<dbReference type="GO" id="GO:0005737">
    <property type="term" value="C:cytoplasm"/>
    <property type="evidence" value="ECO:0007669"/>
    <property type="project" value="UniProtKB-SubCell"/>
</dbReference>
<dbReference type="GO" id="GO:0051539">
    <property type="term" value="F:4 iron, 4 sulfur cluster binding"/>
    <property type="evidence" value="ECO:0007669"/>
    <property type="project" value="UniProtKB-UniRule"/>
</dbReference>
<dbReference type="GO" id="GO:0046872">
    <property type="term" value="F:metal ion binding"/>
    <property type="evidence" value="ECO:0007669"/>
    <property type="project" value="UniProtKB-KW"/>
</dbReference>
<dbReference type="GO" id="GO:0070040">
    <property type="term" value="F:rRNA (adenine(2503)-C2-)-methyltransferase activity"/>
    <property type="evidence" value="ECO:0007669"/>
    <property type="project" value="UniProtKB-UniRule"/>
</dbReference>
<dbReference type="GO" id="GO:0019843">
    <property type="term" value="F:rRNA binding"/>
    <property type="evidence" value="ECO:0007669"/>
    <property type="project" value="UniProtKB-UniRule"/>
</dbReference>
<dbReference type="GO" id="GO:0002935">
    <property type="term" value="F:tRNA (adenine(37)-C2)-methyltransferase activity"/>
    <property type="evidence" value="ECO:0007669"/>
    <property type="project" value="UniProtKB-UniRule"/>
</dbReference>
<dbReference type="GO" id="GO:0000049">
    <property type="term" value="F:tRNA binding"/>
    <property type="evidence" value="ECO:0007669"/>
    <property type="project" value="UniProtKB-UniRule"/>
</dbReference>
<dbReference type="GO" id="GO:0070475">
    <property type="term" value="P:rRNA base methylation"/>
    <property type="evidence" value="ECO:0007669"/>
    <property type="project" value="UniProtKB-UniRule"/>
</dbReference>
<dbReference type="GO" id="GO:0030488">
    <property type="term" value="P:tRNA methylation"/>
    <property type="evidence" value="ECO:0007669"/>
    <property type="project" value="UniProtKB-UniRule"/>
</dbReference>
<dbReference type="CDD" id="cd01335">
    <property type="entry name" value="Radical_SAM"/>
    <property type="match status" value="1"/>
</dbReference>
<dbReference type="FunFam" id="3.20.20.70:FF:000014">
    <property type="entry name" value="Probable dual-specificity RNA methyltransferase RlmN"/>
    <property type="match status" value="1"/>
</dbReference>
<dbReference type="Gene3D" id="1.10.150.530">
    <property type="match status" value="1"/>
</dbReference>
<dbReference type="Gene3D" id="3.20.20.70">
    <property type="entry name" value="Aldolase class I"/>
    <property type="match status" value="1"/>
</dbReference>
<dbReference type="HAMAP" id="MF_01849">
    <property type="entry name" value="RNA_methyltr_RlmN"/>
    <property type="match status" value="1"/>
</dbReference>
<dbReference type="InterPro" id="IPR013785">
    <property type="entry name" value="Aldolase_TIM"/>
</dbReference>
<dbReference type="InterPro" id="IPR040072">
    <property type="entry name" value="Methyltransferase_A"/>
</dbReference>
<dbReference type="InterPro" id="IPR048641">
    <property type="entry name" value="RlmN_N"/>
</dbReference>
<dbReference type="InterPro" id="IPR027492">
    <property type="entry name" value="RNA_MTrfase_RlmN"/>
</dbReference>
<dbReference type="InterPro" id="IPR004383">
    <property type="entry name" value="rRNA_lsu_MTrfase_RlmN/Cfr"/>
</dbReference>
<dbReference type="InterPro" id="IPR007197">
    <property type="entry name" value="rSAM"/>
</dbReference>
<dbReference type="NCBIfam" id="TIGR00048">
    <property type="entry name" value="rRNA_mod_RlmN"/>
    <property type="match status" value="1"/>
</dbReference>
<dbReference type="PANTHER" id="PTHR30544">
    <property type="entry name" value="23S RRNA METHYLTRANSFERASE"/>
    <property type="match status" value="1"/>
</dbReference>
<dbReference type="PANTHER" id="PTHR30544:SF5">
    <property type="entry name" value="RADICAL SAM CORE DOMAIN-CONTAINING PROTEIN"/>
    <property type="match status" value="1"/>
</dbReference>
<dbReference type="Pfam" id="PF04055">
    <property type="entry name" value="Radical_SAM"/>
    <property type="match status" value="1"/>
</dbReference>
<dbReference type="Pfam" id="PF21016">
    <property type="entry name" value="RlmN_N"/>
    <property type="match status" value="1"/>
</dbReference>
<dbReference type="SFLD" id="SFLDF00275">
    <property type="entry name" value="adenosine_C2_methyltransferase"/>
    <property type="match status" value="1"/>
</dbReference>
<dbReference type="SFLD" id="SFLDS00029">
    <property type="entry name" value="Radical_SAM"/>
    <property type="match status" value="1"/>
</dbReference>
<dbReference type="SUPFAM" id="SSF102114">
    <property type="entry name" value="Radical SAM enzymes"/>
    <property type="match status" value="1"/>
</dbReference>
<dbReference type="PROSITE" id="PS51918">
    <property type="entry name" value="RADICAL_SAM"/>
    <property type="match status" value="1"/>
</dbReference>
<reference key="1">
    <citation type="journal article" date="2005" name="DNA Res.">
        <title>Complete genome sequence of the facultative anaerobic magnetotactic bacterium Magnetospirillum sp. strain AMB-1.</title>
        <authorList>
            <person name="Matsunaga T."/>
            <person name="Okamura Y."/>
            <person name="Fukuda Y."/>
            <person name="Wahyudi A.T."/>
            <person name="Murase Y."/>
            <person name="Takeyama H."/>
        </authorList>
    </citation>
    <scope>NUCLEOTIDE SEQUENCE [LARGE SCALE GENOMIC DNA]</scope>
    <source>
        <strain>ATCC 700264 / AMB-1</strain>
    </source>
</reference>
<keyword id="KW-0004">4Fe-4S</keyword>
<keyword id="KW-0963">Cytoplasm</keyword>
<keyword id="KW-1015">Disulfide bond</keyword>
<keyword id="KW-0408">Iron</keyword>
<keyword id="KW-0411">Iron-sulfur</keyword>
<keyword id="KW-0479">Metal-binding</keyword>
<keyword id="KW-0489">Methyltransferase</keyword>
<keyword id="KW-0698">rRNA processing</keyword>
<keyword id="KW-0949">S-adenosyl-L-methionine</keyword>
<keyword id="KW-0808">Transferase</keyword>
<keyword id="KW-0819">tRNA processing</keyword>
<accession>Q2W897</accession>
<comment type="function">
    <text evidence="1">Specifically methylates position 2 of adenine 2503 in 23S rRNA and position 2 of adenine 37 in tRNAs. m2A2503 modification seems to play a crucial role in the proofreading step occurring at the peptidyl transferase center and thus would serve to optimize ribosomal fidelity.</text>
</comment>
<comment type="catalytic activity">
    <reaction evidence="1">
        <text>adenosine(2503) in 23S rRNA + 2 reduced [2Fe-2S]-[ferredoxin] + 2 S-adenosyl-L-methionine = 2-methyladenosine(2503) in 23S rRNA + 5'-deoxyadenosine + L-methionine + 2 oxidized [2Fe-2S]-[ferredoxin] + S-adenosyl-L-homocysteine</text>
        <dbReference type="Rhea" id="RHEA:42916"/>
        <dbReference type="Rhea" id="RHEA-COMP:10000"/>
        <dbReference type="Rhea" id="RHEA-COMP:10001"/>
        <dbReference type="Rhea" id="RHEA-COMP:10152"/>
        <dbReference type="Rhea" id="RHEA-COMP:10282"/>
        <dbReference type="ChEBI" id="CHEBI:17319"/>
        <dbReference type="ChEBI" id="CHEBI:33737"/>
        <dbReference type="ChEBI" id="CHEBI:33738"/>
        <dbReference type="ChEBI" id="CHEBI:57844"/>
        <dbReference type="ChEBI" id="CHEBI:57856"/>
        <dbReference type="ChEBI" id="CHEBI:59789"/>
        <dbReference type="ChEBI" id="CHEBI:74411"/>
        <dbReference type="ChEBI" id="CHEBI:74497"/>
        <dbReference type="EC" id="2.1.1.192"/>
    </reaction>
</comment>
<comment type="catalytic activity">
    <reaction evidence="1">
        <text>adenosine(37) in tRNA + 2 reduced [2Fe-2S]-[ferredoxin] + 2 S-adenosyl-L-methionine = 2-methyladenosine(37) in tRNA + 5'-deoxyadenosine + L-methionine + 2 oxidized [2Fe-2S]-[ferredoxin] + S-adenosyl-L-homocysteine</text>
        <dbReference type="Rhea" id="RHEA:43332"/>
        <dbReference type="Rhea" id="RHEA-COMP:10000"/>
        <dbReference type="Rhea" id="RHEA-COMP:10001"/>
        <dbReference type="Rhea" id="RHEA-COMP:10162"/>
        <dbReference type="Rhea" id="RHEA-COMP:10485"/>
        <dbReference type="ChEBI" id="CHEBI:17319"/>
        <dbReference type="ChEBI" id="CHEBI:33737"/>
        <dbReference type="ChEBI" id="CHEBI:33738"/>
        <dbReference type="ChEBI" id="CHEBI:57844"/>
        <dbReference type="ChEBI" id="CHEBI:57856"/>
        <dbReference type="ChEBI" id="CHEBI:59789"/>
        <dbReference type="ChEBI" id="CHEBI:74411"/>
        <dbReference type="ChEBI" id="CHEBI:74497"/>
        <dbReference type="EC" id="2.1.1.192"/>
    </reaction>
</comment>
<comment type="cofactor">
    <cofactor evidence="1">
        <name>[4Fe-4S] cluster</name>
        <dbReference type="ChEBI" id="CHEBI:49883"/>
    </cofactor>
    <text evidence="1">Binds 1 [4Fe-4S] cluster. The cluster is coordinated with 3 cysteines and an exchangeable S-adenosyl-L-methionine.</text>
</comment>
<comment type="subcellular location">
    <subcellularLocation>
        <location evidence="1">Cytoplasm</location>
    </subcellularLocation>
</comment>
<comment type="miscellaneous">
    <text evidence="1">Reaction proceeds by a ping-pong mechanism involving intermediate methylation of a conserved cysteine residue.</text>
</comment>
<comment type="similarity">
    <text evidence="1">Belongs to the radical SAM superfamily. RlmN family.</text>
</comment>
<comment type="sequence caution" evidence="4">
    <conflict type="erroneous initiation">
        <sequence resource="EMBL-CDS" id="BAE49928"/>
    </conflict>
</comment>
<evidence type="ECO:0000255" key="1">
    <source>
        <dbReference type="HAMAP-Rule" id="MF_01849"/>
    </source>
</evidence>
<evidence type="ECO:0000255" key="2">
    <source>
        <dbReference type="PROSITE-ProRule" id="PRU01266"/>
    </source>
</evidence>
<evidence type="ECO:0000256" key="3">
    <source>
        <dbReference type="SAM" id="MobiDB-lite"/>
    </source>
</evidence>
<evidence type="ECO:0000305" key="4"/>
<organism>
    <name type="scientific">Paramagnetospirillum magneticum (strain ATCC 700264 / AMB-1)</name>
    <name type="common">Magnetospirillum magneticum</name>
    <dbReference type="NCBI Taxonomy" id="342108"/>
    <lineage>
        <taxon>Bacteria</taxon>
        <taxon>Pseudomonadati</taxon>
        <taxon>Pseudomonadota</taxon>
        <taxon>Alphaproteobacteria</taxon>
        <taxon>Rhodospirillales</taxon>
        <taxon>Magnetospirillaceae</taxon>
        <taxon>Paramagnetospirillum</taxon>
    </lineage>
</organism>
<gene>
    <name evidence="1" type="primary">rlmN</name>
    <name type="ordered locus">amb1124</name>
</gene>
<feature type="chain" id="PRO_0000350244" description="Dual-specificity RNA methyltransferase RlmN">
    <location>
        <begin position="1"/>
        <end position="456"/>
    </location>
</feature>
<feature type="domain" description="Radical SAM core" evidence="2">
    <location>
        <begin position="183"/>
        <end position="416"/>
    </location>
</feature>
<feature type="region of interest" description="Disordered" evidence="3">
    <location>
        <begin position="1"/>
        <end position="21"/>
    </location>
</feature>
<feature type="active site" description="Proton acceptor" evidence="1">
    <location>
        <position position="175"/>
    </location>
</feature>
<feature type="active site" description="S-methylcysteine intermediate" evidence="1">
    <location>
        <position position="427"/>
    </location>
</feature>
<feature type="binding site" evidence="1">
    <location>
        <position position="197"/>
    </location>
    <ligand>
        <name>[4Fe-4S] cluster</name>
        <dbReference type="ChEBI" id="CHEBI:49883"/>
        <note>4Fe-4S-S-AdoMet</note>
    </ligand>
</feature>
<feature type="binding site" evidence="1">
    <location>
        <position position="201"/>
    </location>
    <ligand>
        <name>[4Fe-4S] cluster</name>
        <dbReference type="ChEBI" id="CHEBI:49883"/>
        <note>4Fe-4S-S-AdoMet</note>
    </ligand>
</feature>
<feature type="binding site" evidence="1">
    <location>
        <position position="204"/>
    </location>
    <ligand>
        <name>[4Fe-4S] cluster</name>
        <dbReference type="ChEBI" id="CHEBI:49883"/>
        <note>4Fe-4S-S-AdoMet</note>
    </ligand>
</feature>
<feature type="binding site" evidence="1">
    <location>
        <begin position="253"/>
        <end position="254"/>
    </location>
    <ligand>
        <name>S-adenosyl-L-methionine</name>
        <dbReference type="ChEBI" id="CHEBI:59789"/>
    </ligand>
</feature>
<feature type="binding site" evidence="1">
    <location>
        <position position="285"/>
    </location>
    <ligand>
        <name>S-adenosyl-L-methionine</name>
        <dbReference type="ChEBI" id="CHEBI:59789"/>
    </ligand>
</feature>
<feature type="binding site" evidence="1">
    <location>
        <begin position="307"/>
        <end position="309"/>
    </location>
    <ligand>
        <name>S-adenosyl-L-methionine</name>
        <dbReference type="ChEBI" id="CHEBI:59789"/>
    </ligand>
</feature>
<feature type="binding site" evidence="1">
    <location>
        <position position="384"/>
    </location>
    <ligand>
        <name>S-adenosyl-L-methionine</name>
        <dbReference type="ChEBI" id="CHEBI:59789"/>
    </ligand>
</feature>
<feature type="disulfide bond" description="(transient)" evidence="1">
    <location>
        <begin position="190"/>
        <end position="427"/>
    </location>
</feature>
<name>RLMN_PARM1</name>